<evidence type="ECO:0000250" key="1"/>
<evidence type="ECO:0000250" key="2">
    <source>
        <dbReference type="UniProtKB" id="Q4VAA2"/>
    </source>
</evidence>
<evidence type="ECO:0000256" key="3">
    <source>
        <dbReference type="SAM" id="MobiDB-lite"/>
    </source>
</evidence>
<evidence type="ECO:0000269" key="4">
    <source>
    </source>
</evidence>
<evidence type="ECO:0000303" key="5">
    <source>
    </source>
</evidence>
<evidence type="ECO:0000303" key="6">
    <source>
    </source>
</evidence>
<evidence type="ECO:0000305" key="7"/>
<evidence type="ECO:0007744" key="8">
    <source>
    </source>
</evidence>
<evidence type="ECO:0007744" key="9">
    <source>
    </source>
</evidence>
<evidence type="ECO:0007744" key="10">
    <source>
    </source>
</evidence>
<evidence type="ECO:0007744" key="11">
    <source>
    </source>
</evidence>
<evidence type="ECO:0007744" key="12">
    <source>
    </source>
</evidence>
<evidence type="ECO:0007744" key="13">
    <source>
    </source>
</evidence>
<evidence type="ECO:0007744" key="14">
    <source>
    </source>
</evidence>
<protein>
    <recommendedName>
        <fullName>Protein CDV3 homolog</fullName>
    </recommendedName>
</protein>
<comment type="subcellular location">
    <subcellularLocation>
        <location evidence="1">Cytoplasm</location>
    </subcellularLocation>
</comment>
<comment type="alternative products">
    <event type="alternative splicing"/>
    <isoform>
        <id>Q9UKY7-1</id>
        <name>1</name>
        <sequence type="displayed"/>
    </isoform>
    <isoform>
        <id>Q9UKY7-2</id>
        <name>2</name>
        <sequence type="described" ref="VSP_027760 VSP_027761"/>
    </isoform>
    <isoform>
        <id>Q9UKY7-3</id>
        <name>3</name>
        <sequence type="described" ref="VSP_041357 VSP_041358 VSP_041359"/>
    </isoform>
</comment>
<comment type="tissue specificity">
    <text evidence="4">Expression levels correlate with those of HER-2/neu in breast cancer cells.</text>
</comment>
<comment type="similarity">
    <text evidence="7">Belongs to the CDV3 family.</text>
</comment>
<accession>Q9UKY7</accession>
<accession>B3KUC2</accession>
<accession>Q96IP9</accession>
<keyword id="KW-0007">Acetylation</keyword>
<keyword id="KW-0025">Alternative splicing</keyword>
<keyword id="KW-0963">Cytoplasm</keyword>
<keyword id="KW-0597">Phosphoprotein</keyword>
<keyword id="KW-1267">Proteomics identification</keyword>
<keyword id="KW-1185">Reference proteome</keyword>
<organism>
    <name type="scientific">Homo sapiens</name>
    <name type="common">Human</name>
    <dbReference type="NCBI Taxonomy" id="9606"/>
    <lineage>
        <taxon>Eukaryota</taxon>
        <taxon>Metazoa</taxon>
        <taxon>Chordata</taxon>
        <taxon>Craniata</taxon>
        <taxon>Vertebrata</taxon>
        <taxon>Euteleostomi</taxon>
        <taxon>Mammalia</taxon>
        <taxon>Eutheria</taxon>
        <taxon>Euarchontoglires</taxon>
        <taxon>Primates</taxon>
        <taxon>Haplorrhini</taxon>
        <taxon>Catarrhini</taxon>
        <taxon>Hominidae</taxon>
        <taxon>Homo</taxon>
    </lineage>
</organism>
<sequence length="258" mass="27335">MAETEERSLDNFFAKRDKKKKKERSNRAASAAGAAGSAGGSSGAAGAAGGGAGAGTRPGDGGTASAGAAGPGAATKAVTKDEDEWKELEQKEVDYSGLRVQAMQISSEKEEDDNEKRQDPGDNWEEGGGGGGGMEKSSGPWNKTAPVQAPPAPVIVTETPEPAMTSGVYRPPGARLTTTRKTPQGPPEIYSDTQFPSLQSTAKHVESRKDKEMEKSFEVVRHKNRGRDEVSKNQALKLQLDNQYAVLENQKSSHSQYN</sequence>
<proteinExistence type="evidence at protein level"/>
<dbReference type="EMBL" id="AF103803">
    <property type="protein sequence ID" value="AAF02423.1"/>
    <property type="molecule type" value="mRNA"/>
</dbReference>
<dbReference type="EMBL" id="AK096865">
    <property type="protein sequence ID" value="BAG53384.1"/>
    <property type="molecule type" value="mRNA"/>
</dbReference>
<dbReference type="EMBL" id="AC016255">
    <property type="status" value="NOT_ANNOTATED_CDS"/>
    <property type="molecule type" value="Genomic_DNA"/>
</dbReference>
<dbReference type="EMBL" id="BC007338">
    <property type="protein sequence ID" value="AAH07338.1"/>
    <property type="molecule type" value="mRNA"/>
</dbReference>
<dbReference type="CCDS" id="CCDS3079.1">
    <molecule id="Q9UKY7-1"/>
</dbReference>
<dbReference type="CCDS" id="CCDS46917.1">
    <molecule id="Q9UKY7-2"/>
</dbReference>
<dbReference type="CCDS" id="CCDS46918.1">
    <molecule id="Q9UKY7-3"/>
</dbReference>
<dbReference type="RefSeq" id="NP_001127894.1">
    <molecule id="Q9UKY7-2"/>
    <property type="nucleotide sequence ID" value="NM_001134422.2"/>
</dbReference>
<dbReference type="RefSeq" id="NP_001127895.1">
    <molecule id="Q9UKY7-3"/>
    <property type="nucleotide sequence ID" value="NM_001134423.2"/>
</dbReference>
<dbReference type="RefSeq" id="NP_001269691.1">
    <property type="nucleotide sequence ID" value="NM_001282762.1"/>
</dbReference>
<dbReference type="RefSeq" id="NP_001269692.1">
    <property type="nucleotide sequence ID" value="NM_001282763.1"/>
</dbReference>
<dbReference type="RefSeq" id="NP_001269693.1">
    <property type="nucleotide sequence ID" value="NM_001282764.1"/>
</dbReference>
<dbReference type="RefSeq" id="NP_001269694.1">
    <property type="nucleotide sequence ID" value="NM_001282765.1"/>
</dbReference>
<dbReference type="RefSeq" id="NP_060018.1">
    <molecule id="Q9UKY7-1"/>
    <property type="nucleotide sequence ID" value="NM_017548.5"/>
</dbReference>
<dbReference type="BioGRID" id="120726">
    <property type="interactions" value="90"/>
</dbReference>
<dbReference type="FunCoup" id="Q9UKY7">
    <property type="interactions" value="2086"/>
</dbReference>
<dbReference type="IntAct" id="Q9UKY7">
    <property type="interactions" value="18"/>
</dbReference>
<dbReference type="STRING" id="9606.ENSP00000264993"/>
<dbReference type="GlyGen" id="Q9UKY7">
    <property type="glycosylation" value="6 sites, 1 O-linked glycan (6 sites)"/>
</dbReference>
<dbReference type="iPTMnet" id="Q9UKY7"/>
<dbReference type="MetOSite" id="Q9UKY7"/>
<dbReference type="PhosphoSitePlus" id="Q9UKY7"/>
<dbReference type="BioMuta" id="CDV3"/>
<dbReference type="DMDM" id="74721018"/>
<dbReference type="jPOST" id="Q9UKY7"/>
<dbReference type="MassIVE" id="Q9UKY7"/>
<dbReference type="PaxDb" id="9606-ENSP00000264993"/>
<dbReference type="PeptideAtlas" id="Q9UKY7"/>
<dbReference type="ProteomicsDB" id="84914">
    <molecule id="Q9UKY7-1"/>
</dbReference>
<dbReference type="ProteomicsDB" id="84915">
    <molecule id="Q9UKY7-2"/>
</dbReference>
<dbReference type="ProteomicsDB" id="84916">
    <molecule id="Q9UKY7-3"/>
</dbReference>
<dbReference type="Pumba" id="Q9UKY7"/>
<dbReference type="TopDownProteomics" id="Q9UKY7-1">
    <molecule id="Q9UKY7-1"/>
</dbReference>
<dbReference type="TopDownProteomics" id="Q9UKY7-2">
    <molecule id="Q9UKY7-2"/>
</dbReference>
<dbReference type="TopDownProteomics" id="Q9UKY7-3">
    <molecule id="Q9UKY7-3"/>
</dbReference>
<dbReference type="Antibodypedia" id="33371">
    <property type="antibodies" value="89 antibodies from 17 providers"/>
</dbReference>
<dbReference type="DNASU" id="55573"/>
<dbReference type="Ensembl" id="ENST00000264993.8">
    <molecule id="Q9UKY7-1"/>
    <property type="protein sequence ID" value="ENSP00000264993.3"/>
    <property type="gene ID" value="ENSG00000091527.17"/>
</dbReference>
<dbReference type="Ensembl" id="ENST00000420115.6">
    <molecule id="Q9UKY7-3"/>
    <property type="protein sequence ID" value="ENSP00000413272.2"/>
    <property type="gene ID" value="ENSG00000091527.17"/>
</dbReference>
<dbReference type="Ensembl" id="ENST00000431519.6">
    <molecule id="Q9UKY7-2"/>
    <property type="protein sequence ID" value="ENSP00000391955.2"/>
    <property type="gene ID" value="ENSG00000091527.17"/>
</dbReference>
<dbReference type="GeneID" id="55573"/>
<dbReference type="KEGG" id="hsa:55573"/>
<dbReference type="MANE-Select" id="ENST00000264993.8">
    <property type="protein sequence ID" value="ENSP00000264993.3"/>
    <property type="RefSeq nucleotide sequence ID" value="NM_017548.5"/>
    <property type="RefSeq protein sequence ID" value="NP_060018.1"/>
</dbReference>
<dbReference type="UCSC" id="uc003epp.5">
    <molecule id="Q9UKY7-1"/>
    <property type="organism name" value="human"/>
</dbReference>
<dbReference type="AGR" id="HGNC:26928"/>
<dbReference type="CTD" id="55573"/>
<dbReference type="DisGeNET" id="55573"/>
<dbReference type="GeneCards" id="CDV3"/>
<dbReference type="HGNC" id="HGNC:26928">
    <property type="gene designation" value="CDV3"/>
</dbReference>
<dbReference type="HPA" id="ENSG00000091527">
    <property type="expression patterns" value="Low tissue specificity"/>
</dbReference>
<dbReference type="MIM" id="618789">
    <property type="type" value="gene"/>
</dbReference>
<dbReference type="neXtProt" id="NX_Q9UKY7"/>
<dbReference type="OpenTargets" id="ENSG00000091527"/>
<dbReference type="PharmGKB" id="PA142672138"/>
<dbReference type="VEuPathDB" id="HostDB:ENSG00000091527"/>
<dbReference type="eggNOG" id="ENOG502QRFT">
    <property type="taxonomic scope" value="Eukaryota"/>
</dbReference>
<dbReference type="GeneTree" id="ENSGT00390000000805"/>
<dbReference type="HOGENOM" id="CLU_089760_1_0_1"/>
<dbReference type="InParanoid" id="Q9UKY7"/>
<dbReference type="OMA" id="TSGPWNK"/>
<dbReference type="OrthoDB" id="6288097at2759"/>
<dbReference type="PAN-GO" id="Q9UKY7">
    <property type="GO annotations" value="1 GO annotation based on evolutionary models"/>
</dbReference>
<dbReference type="PhylomeDB" id="Q9UKY7"/>
<dbReference type="TreeFam" id="TF315891"/>
<dbReference type="PathwayCommons" id="Q9UKY7"/>
<dbReference type="SignaLink" id="Q9UKY7"/>
<dbReference type="BioGRID-ORCS" id="55573">
    <property type="hits" value="21 hits in 1156 CRISPR screens"/>
</dbReference>
<dbReference type="CD-CODE" id="DEE660B4">
    <property type="entry name" value="Stress granule"/>
</dbReference>
<dbReference type="ChiTaRS" id="CDV3">
    <property type="organism name" value="human"/>
</dbReference>
<dbReference type="GenomeRNAi" id="55573"/>
<dbReference type="Pharos" id="Q9UKY7">
    <property type="development level" value="Tbio"/>
</dbReference>
<dbReference type="PRO" id="PR:Q9UKY7"/>
<dbReference type="Proteomes" id="UP000005640">
    <property type="component" value="Chromosome 3"/>
</dbReference>
<dbReference type="RNAct" id="Q9UKY7">
    <property type="molecule type" value="protein"/>
</dbReference>
<dbReference type="Bgee" id="ENSG00000091527">
    <property type="expression patterns" value="Expressed in parietal pleura and 208 other cell types or tissues"/>
</dbReference>
<dbReference type="ExpressionAtlas" id="Q9UKY7">
    <property type="expression patterns" value="baseline and differential"/>
</dbReference>
<dbReference type="GO" id="GO:0005737">
    <property type="term" value="C:cytoplasm"/>
    <property type="evidence" value="ECO:0000318"/>
    <property type="project" value="GO_Central"/>
</dbReference>
<dbReference type="GO" id="GO:0005829">
    <property type="term" value="C:cytosol"/>
    <property type="evidence" value="ECO:0000314"/>
    <property type="project" value="HPA"/>
</dbReference>
<dbReference type="GO" id="GO:0005886">
    <property type="term" value="C:plasma membrane"/>
    <property type="evidence" value="ECO:0000314"/>
    <property type="project" value="HPA"/>
</dbReference>
<dbReference type="InterPro" id="IPR026806">
    <property type="entry name" value="CDV3"/>
</dbReference>
<dbReference type="PANTHER" id="PTHR16284">
    <property type="entry name" value="PROTEIN CDV3 HOMOLOG"/>
    <property type="match status" value="1"/>
</dbReference>
<dbReference type="PANTHER" id="PTHR16284:SF13">
    <property type="entry name" value="PROTEIN CDV3 HOMOLOG"/>
    <property type="match status" value="1"/>
</dbReference>
<dbReference type="Pfam" id="PF15359">
    <property type="entry name" value="CDV3"/>
    <property type="match status" value="1"/>
</dbReference>
<gene>
    <name type="primary">CDV3</name>
    <name type="synonym">H41</name>
</gene>
<reference key="1">
    <citation type="journal article" date="1999" name="Nucleic Acids Res.">
        <title>Identification of differentially expressed genes associated with HER-2/neu overexpression in human breast cancer cells.</title>
        <authorList>
            <person name="Oh J.J."/>
            <person name="Grosshans D.R."/>
            <person name="Wong S.G."/>
            <person name="Slamon D.J."/>
        </authorList>
    </citation>
    <scope>NUCLEOTIDE SEQUENCE [MRNA] (ISOFORM 1)</scope>
    <scope>TISSUE SPECIFICITY</scope>
</reference>
<reference key="2">
    <citation type="journal article" date="2004" name="Nat. Genet.">
        <title>Complete sequencing and characterization of 21,243 full-length human cDNAs.</title>
        <authorList>
            <person name="Ota T."/>
            <person name="Suzuki Y."/>
            <person name="Nishikawa T."/>
            <person name="Otsuki T."/>
            <person name="Sugiyama T."/>
            <person name="Irie R."/>
            <person name="Wakamatsu A."/>
            <person name="Hayashi K."/>
            <person name="Sato H."/>
            <person name="Nagai K."/>
            <person name="Kimura K."/>
            <person name="Makita H."/>
            <person name="Sekine M."/>
            <person name="Obayashi M."/>
            <person name="Nishi T."/>
            <person name="Shibahara T."/>
            <person name="Tanaka T."/>
            <person name="Ishii S."/>
            <person name="Yamamoto J."/>
            <person name="Saito K."/>
            <person name="Kawai Y."/>
            <person name="Isono Y."/>
            <person name="Nakamura Y."/>
            <person name="Nagahari K."/>
            <person name="Murakami K."/>
            <person name="Yasuda T."/>
            <person name="Iwayanagi T."/>
            <person name="Wagatsuma M."/>
            <person name="Shiratori A."/>
            <person name="Sudo H."/>
            <person name="Hosoiri T."/>
            <person name="Kaku Y."/>
            <person name="Kodaira H."/>
            <person name="Kondo H."/>
            <person name="Sugawara M."/>
            <person name="Takahashi M."/>
            <person name="Kanda K."/>
            <person name="Yokoi T."/>
            <person name="Furuya T."/>
            <person name="Kikkawa E."/>
            <person name="Omura Y."/>
            <person name="Abe K."/>
            <person name="Kamihara K."/>
            <person name="Katsuta N."/>
            <person name="Sato K."/>
            <person name="Tanikawa M."/>
            <person name="Yamazaki M."/>
            <person name="Ninomiya K."/>
            <person name="Ishibashi T."/>
            <person name="Yamashita H."/>
            <person name="Murakawa K."/>
            <person name="Fujimori K."/>
            <person name="Tanai H."/>
            <person name="Kimata M."/>
            <person name="Watanabe M."/>
            <person name="Hiraoka S."/>
            <person name="Chiba Y."/>
            <person name="Ishida S."/>
            <person name="Ono Y."/>
            <person name="Takiguchi S."/>
            <person name="Watanabe S."/>
            <person name="Yosida M."/>
            <person name="Hotuta T."/>
            <person name="Kusano J."/>
            <person name="Kanehori K."/>
            <person name="Takahashi-Fujii A."/>
            <person name="Hara H."/>
            <person name="Tanase T.-O."/>
            <person name="Nomura Y."/>
            <person name="Togiya S."/>
            <person name="Komai F."/>
            <person name="Hara R."/>
            <person name="Takeuchi K."/>
            <person name="Arita M."/>
            <person name="Imose N."/>
            <person name="Musashino K."/>
            <person name="Yuuki H."/>
            <person name="Oshima A."/>
            <person name="Sasaki N."/>
            <person name="Aotsuka S."/>
            <person name="Yoshikawa Y."/>
            <person name="Matsunawa H."/>
            <person name="Ichihara T."/>
            <person name="Shiohata N."/>
            <person name="Sano S."/>
            <person name="Moriya S."/>
            <person name="Momiyama H."/>
            <person name="Satoh N."/>
            <person name="Takami S."/>
            <person name="Terashima Y."/>
            <person name="Suzuki O."/>
            <person name="Nakagawa S."/>
            <person name="Senoh A."/>
            <person name="Mizoguchi H."/>
            <person name="Goto Y."/>
            <person name="Shimizu F."/>
            <person name="Wakebe H."/>
            <person name="Hishigaki H."/>
            <person name="Watanabe T."/>
            <person name="Sugiyama A."/>
            <person name="Takemoto M."/>
            <person name="Kawakami B."/>
            <person name="Yamazaki M."/>
            <person name="Watanabe K."/>
            <person name="Kumagai A."/>
            <person name="Itakura S."/>
            <person name="Fukuzumi Y."/>
            <person name="Fujimori Y."/>
            <person name="Komiyama M."/>
            <person name="Tashiro H."/>
            <person name="Tanigami A."/>
            <person name="Fujiwara T."/>
            <person name="Ono T."/>
            <person name="Yamada K."/>
            <person name="Fujii Y."/>
            <person name="Ozaki K."/>
            <person name="Hirao M."/>
            <person name="Ohmori Y."/>
            <person name="Kawabata A."/>
            <person name="Hikiji T."/>
            <person name="Kobatake N."/>
            <person name="Inagaki H."/>
            <person name="Ikema Y."/>
            <person name="Okamoto S."/>
            <person name="Okitani R."/>
            <person name="Kawakami T."/>
            <person name="Noguchi S."/>
            <person name="Itoh T."/>
            <person name="Shigeta K."/>
            <person name="Senba T."/>
            <person name="Matsumura K."/>
            <person name="Nakajima Y."/>
            <person name="Mizuno T."/>
            <person name="Morinaga M."/>
            <person name="Sasaki M."/>
            <person name="Togashi T."/>
            <person name="Oyama M."/>
            <person name="Hata H."/>
            <person name="Watanabe M."/>
            <person name="Komatsu T."/>
            <person name="Mizushima-Sugano J."/>
            <person name="Satoh T."/>
            <person name="Shirai Y."/>
            <person name="Takahashi Y."/>
            <person name="Nakagawa K."/>
            <person name="Okumura K."/>
            <person name="Nagase T."/>
            <person name="Nomura N."/>
            <person name="Kikuchi H."/>
            <person name="Masuho Y."/>
            <person name="Yamashita R."/>
            <person name="Nakai K."/>
            <person name="Yada T."/>
            <person name="Nakamura Y."/>
            <person name="Ohara O."/>
            <person name="Isogai T."/>
            <person name="Sugano S."/>
        </authorList>
    </citation>
    <scope>NUCLEOTIDE SEQUENCE [LARGE SCALE MRNA] (ISOFORM 3)</scope>
</reference>
<reference key="3">
    <citation type="journal article" date="2006" name="Nature">
        <title>The DNA sequence, annotation and analysis of human chromosome 3.</title>
        <authorList>
            <person name="Muzny D.M."/>
            <person name="Scherer S.E."/>
            <person name="Kaul R."/>
            <person name="Wang J."/>
            <person name="Yu J."/>
            <person name="Sudbrak R."/>
            <person name="Buhay C.J."/>
            <person name="Chen R."/>
            <person name="Cree A."/>
            <person name="Ding Y."/>
            <person name="Dugan-Rocha S."/>
            <person name="Gill R."/>
            <person name="Gunaratne P."/>
            <person name="Harris R.A."/>
            <person name="Hawes A.C."/>
            <person name="Hernandez J."/>
            <person name="Hodgson A.V."/>
            <person name="Hume J."/>
            <person name="Jackson A."/>
            <person name="Khan Z.M."/>
            <person name="Kovar-Smith C."/>
            <person name="Lewis L.R."/>
            <person name="Lozado R.J."/>
            <person name="Metzker M.L."/>
            <person name="Milosavljevic A."/>
            <person name="Miner G.R."/>
            <person name="Morgan M.B."/>
            <person name="Nazareth L.V."/>
            <person name="Scott G."/>
            <person name="Sodergren E."/>
            <person name="Song X.-Z."/>
            <person name="Steffen D."/>
            <person name="Wei S."/>
            <person name="Wheeler D.A."/>
            <person name="Wright M.W."/>
            <person name="Worley K.C."/>
            <person name="Yuan Y."/>
            <person name="Zhang Z."/>
            <person name="Adams C.Q."/>
            <person name="Ansari-Lari M.A."/>
            <person name="Ayele M."/>
            <person name="Brown M.J."/>
            <person name="Chen G."/>
            <person name="Chen Z."/>
            <person name="Clendenning J."/>
            <person name="Clerc-Blankenburg K.P."/>
            <person name="Chen R."/>
            <person name="Chen Z."/>
            <person name="Davis C."/>
            <person name="Delgado O."/>
            <person name="Dinh H.H."/>
            <person name="Dong W."/>
            <person name="Draper H."/>
            <person name="Ernst S."/>
            <person name="Fu G."/>
            <person name="Gonzalez-Garay M.L."/>
            <person name="Garcia D.K."/>
            <person name="Gillett W."/>
            <person name="Gu J."/>
            <person name="Hao B."/>
            <person name="Haugen E."/>
            <person name="Havlak P."/>
            <person name="He X."/>
            <person name="Hennig S."/>
            <person name="Hu S."/>
            <person name="Huang W."/>
            <person name="Jackson L.R."/>
            <person name="Jacob L.S."/>
            <person name="Kelly S.H."/>
            <person name="Kube M."/>
            <person name="Levy R."/>
            <person name="Li Z."/>
            <person name="Liu B."/>
            <person name="Liu J."/>
            <person name="Liu W."/>
            <person name="Lu J."/>
            <person name="Maheshwari M."/>
            <person name="Nguyen B.-V."/>
            <person name="Okwuonu G.O."/>
            <person name="Palmeiri A."/>
            <person name="Pasternak S."/>
            <person name="Perez L.M."/>
            <person name="Phelps K.A."/>
            <person name="Plopper F.J."/>
            <person name="Qiang B."/>
            <person name="Raymond C."/>
            <person name="Rodriguez R."/>
            <person name="Saenphimmachak C."/>
            <person name="Santibanez J."/>
            <person name="Shen H."/>
            <person name="Shen Y."/>
            <person name="Subramanian S."/>
            <person name="Tabor P.E."/>
            <person name="Verduzco D."/>
            <person name="Waldron L."/>
            <person name="Wang J."/>
            <person name="Wang J."/>
            <person name="Wang Q."/>
            <person name="Williams G.A."/>
            <person name="Wong G.K.-S."/>
            <person name="Yao Z."/>
            <person name="Zhang J."/>
            <person name="Zhang X."/>
            <person name="Zhao G."/>
            <person name="Zhou J."/>
            <person name="Zhou Y."/>
            <person name="Nelson D."/>
            <person name="Lehrach H."/>
            <person name="Reinhardt R."/>
            <person name="Naylor S.L."/>
            <person name="Yang H."/>
            <person name="Olson M."/>
            <person name="Weinstock G."/>
            <person name="Gibbs R.A."/>
        </authorList>
    </citation>
    <scope>NUCLEOTIDE SEQUENCE [LARGE SCALE GENOMIC DNA]</scope>
</reference>
<reference key="4">
    <citation type="journal article" date="2004" name="Genome Res.">
        <title>The status, quality, and expansion of the NIH full-length cDNA project: the Mammalian Gene Collection (MGC).</title>
        <authorList>
            <consortium name="The MGC Project Team"/>
        </authorList>
    </citation>
    <scope>NUCLEOTIDE SEQUENCE [LARGE SCALE MRNA] (ISOFORM 2)</scope>
    <source>
        <tissue>Lymph</tissue>
    </source>
</reference>
<reference key="5">
    <citation type="journal article" date="2004" name="Anal. Chem.">
        <title>Robust phosphoproteomic profiling of tyrosine phosphorylation sites from human T cells using immobilized metal affinity chromatography and tandem mass spectrometry.</title>
        <authorList>
            <person name="Brill L.M."/>
            <person name="Salomon A.R."/>
            <person name="Ficarro S.B."/>
            <person name="Mukherji M."/>
            <person name="Stettler-Gill M."/>
            <person name="Peters E.C."/>
        </authorList>
    </citation>
    <scope>PHOSPHORYLATION [LARGE SCALE ANALYSIS] AT TYR-244</scope>
    <scope>IDENTIFICATION BY MASS SPECTROMETRY [LARGE SCALE ANALYSIS]</scope>
    <source>
        <tissue>Leukemic T-cell</tissue>
    </source>
</reference>
<reference key="6">
    <citation type="journal article" date="2008" name="Proc. Natl. Acad. Sci. U.S.A.">
        <title>A quantitative atlas of mitotic phosphorylation.</title>
        <authorList>
            <person name="Dephoure N."/>
            <person name="Zhou C."/>
            <person name="Villen J."/>
            <person name="Beausoleil S.A."/>
            <person name="Bakalarski C.E."/>
            <person name="Elledge S.J."/>
            <person name="Gygi S.P."/>
        </authorList>
    </citation>
    <scope>PHOSPHORYLATION [LARGE SCALE ANALYSIS] AT THR-182</scope>
    <scope>IDENTIFICATION BY MASS SPECTROMETRY [LARGE SCALE ANALYSIS]</scope>
    <source>
        <tissue>Cervix carcinoma</tissue>
    </source>
</reference>
<reference key="7">
    <citation type="journal article" date="2009" name="Anal. Chem.">
        <title>Lys-N and trypsin cover complementary parts of the phosphoproteome in a refined SCX-based approach.</title>
        <authorList>
            <person name="Gauci S."/>
            <person name="Helbig A.O."/>
            <person name="Slijper M."/>
            <person name="Krijgsveld J."/>
            <person name="Heck A.J."/>
            <person name="Mohammed S."/>
        </authorList>
    </citation>
    <scope>ACETYLATION [LARGE SCALE ANALYSIS] AT ALA-2</scope>
    <scope>CLEAVAGE OF INITIATOR METHIONINE [LARGE SCALE ANALYSIS]</scope>
    <scope>IDENTIFICATION BY MASS SPECTROMETRY [LARGE SCALE ANALYSIS]</scope>
</reference>
<reference key="8">
    <citation type="journal article" date="2010" name="Sci. Signal.">
        <title>Quantitative phosphoproteomics reveals widespread full phosphorylation site occupancy during mitosis.</title>
        <authorList>
            <person name="Olsen J.V."/>
            <person name="Vermeulen M."/>
            <person name="Santamaria A."/>
            <person name="Kumar C."/>
            <person name="Miller M.L."/>
            <person name="Jensen L.J."/>
            <person name="Gnad F."/>
            <person name="Cox J."/>
            <person name="Jensen T.S."/>
            <person name="Nigg E.A."/>
            <person name="Brunak S."/>
            <person name="Mann M."/>
        </authorList>
    </citation>
    <scope>PHOSPHORYLATION [LARGE SCALE ANALYSIS] AT SER-107 AND THR-182</scope>
    <scope>IDENTIFICATION BY MASS SPECTROMETRY [LARGE SCALE ANALYSIS]</scope>
    <source>
        <tissue>Cervix carcinoma</tissue>
    </source>
</reference>
<reference key="9">
    <citation type="journal article" date="2011" name="BMC Syst. Biol.">
        <title>Initial characterization of the human central proteome.</title>
        <authorList>
            <person name="Burkard T.R."/>
            <person name="Planyavsky M."/>
            <person name="Kaupe I."/>
            <person name="Breitwieser F.P."/>
            <person name="Buerckstuemmer T."/>
            <person name="Bennett K.L."/>
            <person name="Superti-Furga G."/>
            <person name="Colinge J."/>
        </authorList>
    </citation>
    <scope>IDENTIFICATION BY MASS SPECTROMETRY [LARGE SCALE ANALYSIS]</scope>
</reference>
<reference key="10">
    <citation type="journal article" date="2011" name="Sci. Signal.">
        <title>System-wide temporal characterization of the proteome and phosphoproteome of human embryonic stem cell differentiation.</title>
        <authorList>
            <person name="Rigbolt K.T."/>
            <person name="Prokhorova T.A."/>
            <person name="Akimov V."/>
            <person name="Henningsen J."/>
            <person name="Johansen P.T."/>
            <person name="Kratchmarova I."/>
            <person name="Kassem M."/>
            <person name="Mann M."/>
            <person name="Olsen J.V."/>
            <person name="Blagoev B."/>
        </authorList>
    </citation>
    <scope>PHOSPHORYLATION [LARGE SCALE ANALYSIS] AT SER-107</scope>
    <scope>IDENTIFICATION BY MASS SPECTROMETRY [LARGE SCALE ANALYSIS]</scope>
</reference>
<reference key="11">
    <citation type="journal article" date="2013" name="J. Proteome Res.">
        <title>Toward a comprehensive characterization of a human cancer cell phosphoproteome.</title>
        <authorList>
            <person name="Zhou H."/>
            <person name="Di Palma S."/>
            <person name="Preisinger C."/>
            <person name="Peng M."/>
            <person name="Polat A.N."/>
            <person name="Heck A.J."/>
            <person name="Mohammed S."/>
        </authorList>
    </citation>
    <scope>PHOSPHORYLATION [LARGE SCALE ANALYSIS] AT THR-4; SER-8; SER-106; SER-107 AND THR-182</scope>
    <scope>IDENTIFICATION BY MASS SPECTROMETRY [LARGE SCALE ANALYSIS]</scope>
    <source>
        <tissue>Cervix carcinoma</tissue>
        <tissue>Erythroleukemia</tissue>
    </source>
</reference>
<reference key="12">
    <citation type="journal article" date="2014" name="J. Proteomics">
        <title>An enzyme assisted RP-RPLC approach for in-depth analysis of human liver phosphoproteome.</title>
        <authorList>
            <person name="Bian Y."/>
            <person name="Song C."/>
            <person name="Cheng K."/>
            <person name="Dong M."/>
            <person name="Wang F."/>
            <person name="Huang J."/>
            <person name="Sun D."/>
            <person name="Wang L."/>
            <person name="Ye M."/>
            <person name="Zou H."/>
        </authorList>
    </citation>
    <scope>PHOSPHORYLATION [LARGE SCALE ANALYSIS] AT SER-107</scope>
    <scope>IDENTIFICATION BY MASS SPECTROMETRY [LARGE SCALE ANALYSIS]</scope>
    <source>
        <tissue>Liver</tissue>
    </source>
</reference>
<name>CDV3_HUMAN</name>
<feature type="initiator methionine" description="Removed" evidence="10">
    <location>
        <position position="1"/>
    </location>
</feature>
<feature type="chain" id="PRO_0000299560" description="Protein CDV3 homolog">
    <location>
        <begin position="2"/>
        <end position="258"/>
    </location>
</feature>
<feature type="region of interest" description="Disordered" evidence="3">
    <location>
        <begin position="1"/>
        <end position="234"/>
    </location>
</feature>
<feature type="compositionally biased region" description="Basic and acidic residues" evidence="3">
    <location>
        <begin position="1"/>
        <end position="15"/>
    </location>
</feature>
<feature type="compositionally biased region" description="Gly residues" evidence="3">
    <location>
        <begin position="36"/>
        <end position="64"/>
    </location>
</feature>
<feature type="compositionally biased region" description="Low complexity" evidence="3">
    <location>
        <begin position="65"/>
        <end position="74"/>
    </location>
</feature>
<feature type="compositionally biased region" description="Polar residues" evidence="3">
    <location>
        <begin position="191"/>
        <end position="202"/>
    </location>
</feature>
<feature type="compositionally biased region" description="Basic and acidic residues" evidence="3">
    <location>
        <begin position="203"/>
        <end position="231"/>
    </location>
</feature>
<feature type="modified residue" description="N-acetylalanine" evidence="10">
    <location>
        <position position="2"/>
    </location>
</feature>
<feature type="modified residue" description="Phosphothreonine" evidence="13">
    <location>
        <position position="4"/>
    </location>
</feature>
<feature type="modified residue" description="Phosphoserine" evidence="13">
    <location>
        <position position="8"/>
    </location>
</feature>
<feature type="modified residue" description="Phosphotyrosine" evidence="2">
    <location>
        <position position="95"/>
    </location>
</feature>
<feature type="modified residue" description="Phosphoserine" evidence="13">
    <location>
        <position position="106"/>
    </location>
</feature>
<feature type="modified residue" description="Phosphoserine" evidence="11 12 13 14">
    <location>
        <position position="107"/>
    </location>
</feature>
<feature type="modified residue" description="Phosphothreonine" evidence="9 11 13">
    <location>
        <position position="182"/>
    </location>
</feature>
<feature type="modified residue" description="Phosphotyrosine" evidence="2">
    <location>
        <position position="190"/>
    </location>
</feature>
<feature type="modified residue" description="Phosphotyrosine" evidence="8">
    <location>
        <position position="244"/>
    </location>
</feature>
<feature type="splice variant" id="VSP_041357" description="In isoform 3." evidence="5">
    <location>
        <begin position="1"/>
        <end position="102"/>
    </location>
</feature>
<feature type="splice variant" id="VSP_027760" description="In isoform 2." evidence="6">
    <original>KDKEM</original>
    <variation>NRYLK</variation>
    <location>
        <begin position="209"/>
        <end position="213"/>
    </location>
</feature>
<feature type="splice variant" id="VSP_041358" description="In isoform 3." evidence="5">
    <original>DKE</original>
    <variation>YLK</variation>
    <location>
        <begin position="210"/>
        <end position="212"/>
    </location>
</feature>
<feature type="splice variant" id="VSP_041359" description="In isoform 3." evidence="5">
    <location>
        <begin position="213"/>
        <end position="258"/>
    </location>
</feature>
<feature type="splice variant" id="VSP_027761" description="In isoform 2." evidence="6">
    <location>
        <begin position="214"/>
        <end position="258"/>
    </location>
</feature>